<comment type="function">
    <text evidence="1">May be involved in V.cholerae virulence, as its expression is under the control of ToxR, a transcriptional activator of several genes associated with virulence.</text>
</comment>
<comment type="catalytic activity">
    <reaction>
        <text>an aldehyde + NAD(+) + H2O = a carboxylate + NADH + 2 H(+)</text>
        <dbReference type="Rhea" id="RHEA:16185"/>
        <dbReference type="ChEBI" id="CHEBI:15377"/>
        <dbReference type="ChEBI" id="CHEBI:15378"/>
        <dbReference type="ChEBI" id="CHEBI:17478"/>
        <dbReference type="ChEBI" id="CHEBI:29067"/>
        <dbReference type="ChEBI" id="CHEBI:57540"/>
        <dbReference type="ChEBI" id="CHEBI:57945"/>
        <dbReference type="EC" id="1.2.1.3"/>
    </reaction>
</comment>
<comment type="pathway">
    <text>Alcohol metabolism; ethanol degradation; acetate from ethanol: step 2/2.</text>
</comment>
<comment type="similarity">
    <text evidence="2">Belongs to the aldehyde dehydrogenase family.</text>
</comment>
<comment type="sequence caution" evidence="2">
    <conflict type="erroneous initiation">
        <sequence resource="EMBL-CDS" id="ABQ21488"/>
    </conflict>
</comment>
<comment type="sequence caution" evidence="2">
    <conflict type="erroneous initiation">
        <sequence resource="EMBL-CDS" id="ACP08852"/>
    </conflict>
</comment>
<gene>
    <name type="primary">aldA</name>
    <name type="synonym">aldA-1</name>
    <name type="ordered locus">VC0395_A0344</name>
    <name type="ordered locus">VC395_0836</name>
</gene>
<evidence type="ECO:0000250" key="1"/>
<evidence type="ECO:0000305" key="2"/>
<keyword id="KW-0520">NAD</keyword>
<keyword id="KW-0560">Oxidoreductase</keyword>
<keyword id="KW-0843">Virulence</keyword>
<organism>
    <name type="scientific">Vibrio cholerae serotype O1 (strain ATCC 39541 / Classical Ogawa 395 / O395)</name>
    <dbReference type="NCBI Taxonomy" id="345073"/>
    <lineage>
        <taxon>Bacteria</taxon>
        <taxon>Pseudomonadati</taxon>
        <taxon>Pseudomonadota</taxon>
        <taxon>Gammaproteobacteria</taxon>
        <taxon>Vibrionales</taxon>
        <taxon>Vibrionaceae</taxon>
        <taxon>Vibrio</taxon>
    </lineage>
</organism>
<dbReference type="EC" id="1.2.1.3"/>
<dbReference type="EMBL" id="AF325733">
    <property type="protein sequence ID" value="AAK20747.1"/>
    <property type="molecule type" value="Genomic_DNA"/>
</dbReference>
<dbReference type="EMBL" id="CP000627">
    <property type="protein sequence ID" value="ABQ21488.1"/>
    <property type="status" value="ALT_INIT"/>
    <property type="molecule type" value="Genomic_DNA"/>
</dbReference>
<dbReference type="EMBL" id="CP001235">
    <property type="protein sequence ID" value="ACP08852.1"/>
    <property type="status" value="ALT_INIT"/>
    <property type="molecule type" value="Genomic_DNA"/>
</dbReference>
<dbReference type="RefSeq" id="WP_000640055.1">
    <property type="nucleotide sequence ID" value="NZ_JAACZH010000023.1"/>
</dbReference>
<dbReference type="SMR" id="A5F3A7"/>
<dbReference type="KEGG" id="vco:VC0395_A0344"/>
<dbReference type="KEGG" id="vcr:VC395_0836"/>
<dbReference type="PATRIC" id="fig|345073.21.peg.807"/>
<dbReference type="eggNOG" id="COG1012">
    <property type="taxonomic scope" value="Bacteria"/>
</dbReference>
<dbReference type="HOGENOM" id="CLU_005391_0_2_6"/>
<dbReference type="UniPathway" id="UPA00780">
    <property type="reaction ID" value="UER00768"/>
</dbReference>
<dbReference type="Proteomes" id="UP000000249">
    <property type="component" value="Chromosome 2"/>
</dbReference>
<dbReference type="GO" id="GO:0004029">
    <property type="term" value="F:aldehyde dehydrogenase (NAD+) activity"/>
    <property type="evidence" value="ECO:0007669"/>
    <property type="project" value="UniProtKB-EC"/>
</dbReference>
<dbReference type="GO" id="GO:0006068">
    <property type="term" value="P:ethanol catabolic process"/>
    <property type="evidence" value="ECO:0007669"/>
    <property type="project" value="UniProtKB-UniPathway"/>
</dbReference>
<dbReference type="CDD" id="cd07559">
    <property type="entry name" value="ALDH_ACDHII_AcoD-like"/>
    <property type="match status" value="1"/>
</dbReference>
<dbReference type="FunFam" id="3.40.605.10:FF:000001">
    <property type="entry name" value="Aldehyde dehydrogenase 1"/>
    <property type="match status" value="1"/>
</dbReference>
<dbReference type="FunFam" id="3.40.309.10:FF:000012">
    <property type="entry name" value="Betaine aldehyde dehydrogenase"/>
    <property type="match status" value="1"/>
</dbReference>
<dbReference type="Gene3D" id="3.40.605.10">
    <property type="entry name" value="Aldehyde Dehydrogenase, Chain A, domain 1"/>
    <property type="match status" value="1"/>
</dbReference>
<dbReference type="Gene3D" id="3.40.309.10">
    <property type="entry name" value="Aldehyde Dehydrogenase, Chain A, domain 2"/>
    <property type="match status" value="1"/>
</dbReference>
<dbReference type="InterPro" id="IPR016161">
    <property type="entry name" value="Ald_DH/histidinol_DH"/>
</dbReference>
<dbReference type="InterPro" id="IPR016163">
    <property type="entry name" value="Ald_DH_C"/>
</dbReference>
<dbReference type="InterPro" id="IPR016160">
    <property type="entry name" value="Ald_DH_CS_CYS"/>
</dbReference>
<dbReference type="InterPro" id="IPR029510">
    <property type="entry name" value="Ald_DH_CS_GLU"/>
</dbReference>
<dbReference type="InterPro" id="IPR016162">
    <property type="entry name" value="Ald_DH_N"/>
</dbReference>
<dbReference type="InterPro" id="IPR015590">
    <property type="entry name" value="Aldehyde_DH_dom"/>
</dbReference>
<dbReference type="PANTHER" id="PTHR43111">
    <property type="entry name" value="ALDEHYDE DEHYDROGENASE B-RELATED"/>
    <property type="match status" value="1"/>
</dbReference>
<dbReference type="PANTHER" id="PTHR43111:SF1">
    <property type="entry name" value="ALDEHYDE DEHYDROGENASE B-RELATED"/>
    <property type="match status" value="1"/>
</dbReference>
<dbReference type="Pfam" id="PF00171">
    <property type="entry name" value="Aldedh"/>
    <property type="match status" value="1"/>
</dbReference>
<dbReference type="SUPFAM" id="SSF53720">
    <property type="entry name" value="ALDH-like"/>
    <property type="match status" value="1"/>
</dbReference>
<dbReference type="PROSITE" id="PS00070">
    <property type="entry name" value="ALDEHYDE_DEHYDR_CYS"/>
    <property type="match status" value="1"/>
</dbReference>
<dbReference type="PROSITE" id="PS00687">
    <property type="entry name" value="ALDEHYDE_DEHYDR_GLU"/>
    <property type="match status" value="1"/>
</dbReference>
<reference key="1">
    <citation type="journal article" date="2001" name="Infect. Immun.">
        <title>Comparison of Vibrio cholerae pathogenicity islands in sixth and seventh pandemic strains.</title>
        <authorList>
            <person name="Karaolis D.K.R."/>
            <person name="Lan R."/>
            <person name="Kaper J.B."/>
            <person name="Reeves P.R."/>
        </authorList>
    </citation>
    <scope>NUCLEOTIDE SEQUENCE [GENOMIC DNA]</scope>
</reference>
<reference key="2">
    <citation type="submission" date="2007-03" db="EMBL/GenBank/DDBJ databases">
        <authorList>
            <person name="Heidelberg J."/>
        </authorList>
    </citation>
    <scope>NUCLEOTIDE SEQUENCE [LARGE SCALE GENOMIC DNA]</scope>
    <source>
        <strain>ATCC 39541 / Classical Ogawa 395 / O395</strain>
    </source>
</reference>
<reference key="3">
    <citation type="journal article" date="2008" name="PLoS ONE">
        <title>A recalibrated molecular clock and independent origins for the cholera pandemic clones.</title>
        <authorList>
            <person name="Feng L."/>
            <person name="Reeves P.R."/>
            <person name="Lan R."/>
            <person name="Ren Y."/>
            <person name="Gao C."/>
            <person name="Zhou Z."/>
            <person name="Ren Y."/>
            <person name="Cheng J."/>
            <person name="Wang W."/>
            <person name="Wang J."/>
            <person name="Qian W."/>
            <person name="Li D."/>
            <person name="Wang L."/>
        </authorList>
    </citation>
    <scope>NUCLEOTIDE SEQUENCE [LARGE SCALE GENOMIC DNA]</scope>
    <source>
        <strain>ATCC 39541 / Classical Ogawa 395 / O395</strain>
    </source>
</reference>
<sequence length="506" mass="55885">MIYPIPNSETSTVHFKDVYDNYIGGQWMKPHSGEYFSNTSPVNGLVFCRVARSSSQDVELALDAAHNALESWSTTSAVERSNILLRIADRIESNLETLAIVESWDNGKPIRETLAADLPLTIDHFRYFAACIRSQEGAASELDSRTLTYHLPEPIGVVGQIIPWNFPLLMAAWKLAPALAAGCTVVLKPAEQTPVSILFLMEIIGDLIPAGVINVVNGFGSEAGNALATSQRIDKLAFTGSTEIGNHILKCAADNLIPSTIELGGKSPNIYFPDIFSHEDQYLDKCIEGALLAFFNQGEVCTCPSRILVHESIYEKFIAKIIERVALIKQGNPLDTETQIGAQVSKEQYDKILGYIQIGKDEGAELIFGGHPNNQENYLSGGYYIKPTLFFGHNQMHIFQEEIFGPVIAITKFKDEIEALHLANDTVYGLGAGVWTRDINIAHRMAKNIKAGRVWVNCYHAYPAHAAFGGYKKSGIGRETHKLTLSHYQNIKNVLISHEIHPLGLF</sequence>
<name>ALDH_VIBC3</name>
<feature type="chain" id="PRO_0000321860" description="Aldehyde dehydrogenase">
    <location>
        <begin position="1"/>
        <end position="506"/>
    </location>
</feature>
<feature type="active site" evidence="1">
    <location>
        <position position="262"/>
    </location>
</feature>
<feature type="active site" evidence="1">
    <location>
        <position position="301"/>
    </location>
</feature>
<feature type="binding site" evidence="1">
    <location>
        <begin position="240"/>
        <end position="245"/>
    </location>
    <ligand>
        <name>NAD(+)</name>
        <dbReference type="ChEBI" id="CHEBI:57540"/>
    </ligand>
</feature>
<protein>
    <recommendedName>
        <fullName>Aldehyde dehydrogenase</fullName>
        <ecNumber>1.2.1.3</ecNumber>
    </recommendedName>
</protein>
<accession>A5F3A7</accession>
<accession>C3LYI6</accession>
<accession>P23240</accession>
<accession>Q9KTS0</accession>
<proteinExistence type="inferred from homology"/>